<accession>P11186</accession>
<accession>P22500</accession>
<name>VG85_BPNF</name>
<proteinExistence type="predicted"/>
<evidence type="ECO:0000305" key="1"/>
<feature type="chain" id="PRO_0000106578" description="Head fiber protein">
    <location>
        <begin position="1"/>
        <end position="257"/>
    </location>
</feature>
<reference key="1">
    <citation type="journal article" date="1986" name="FEBS Lett.">
        <title>The nucleotide sequences of the heterologous region between the genomes of Bacillus phages M2 and Nf that indicate the two phages are originally identical.</title>
        <authorList>
            <person name="Mizukami Y."/>
            <person name="Sekiya T."/>
            <person name="Hirokawa H."/>
        </authorList>
    </citation>
    <scope>NUCLEOTIDE SEQUENCE [GENOMIC DNA]</scope>
</reference>
<reference key="2">
    <citation type="journal article" date="1990" name="J. Gen. Appl. Microbiol.">
        <title>Head fiber protein gene of bacteriophage Nf.</title>
        <authorList>
            <person name="Yoo S.K."/>
            <person name="Braithwaite D.K."/>
            <person name="Ito J."/>
        </authorList>
    </citation>
    <scope>NUCLEOTIDE SEQUENCE [GENOMIC DNA]</scope>
</reference>
<organism>
    <name type="scientific">Bacillus phage Nf</name>
    <name type="common">Bacteriophage Nf</name>
    <dbReference type="NCBI Taxonomy" id="2992639"/>
    <lineage>
        <taxon>Viruses</taxon>
        <taxon>Duplodnaviria</taxon>
        <taxon>Heunggongvirae</taxon>
        <taxon>Uroviricota</taxon>
        <taxon>Caudoviricetes</taxon>
        <taxon>Salasmaviridae</taxon>
        <taxon>Picovirinae</taxon>
        <taxon>Beecentumtrevirus</taxon>
        <taxon>Beecentumtrevirus Nf</taxon>
    </lineage>
</organism>
<protein>
    <recommendedName>
        <fullName>Head fiber protein</fullName>
    </recommendedName>
    <alternativeName>
        <fullName>Late protein GP8.5</fullName>
    </alternativeName>
</protein>
<comment type="subcellular location">
    <subcellularLocation>
        <location evidence="1">Virion</location>
    </subcellularLocation>
</comment>
<comment type="sequence caution" evidence="1">
    <conflict type="frameshift">
        <sequence resource="EMBL-CDS" id="CAA27289"/>
    </conflict>
</comment>
<dbReference type="EMBL" id="X03643">
    <property type="protein sequence ID" value="CAA27289.1"/>
    <property type="status" value="ALT_FRAME"/>
    <property type="molecule type" value="Genomic_DNA"/>
</dbReference>
<dbReference type="EMBL" id="X52807">
    <property type="protein sequence ID" value="CAA36995.1"/>
    <property type="molecule type" value="Genomic_DNA"/>
</dbReference>
<dbReference type="PIR" id="A23632">
    <property type="entry name" value="ACBPNF"/>
</dbReference>
<dbReference type="PIR" id="S11638">
    <property type="entry name" value="S11638"/>
</dbReference>
<dbReference type="SMR" id="P11186"/>
<dbReference type="GO" id="GO:0044423">
    <property type="term" value="C:virion component"/>
    <property type="evidence" value="ECO:0007669"/>
    <property type="project" value="UniProtKB-KW"/>
</dbReference>
<dbReference type="GO" id="GO:0046718">
    <property type="term" value="P:symbiont entry into host cell"/>
    <property type="evidence" value="ECO:0007669"/>
    <property type="project" value="UniProtKB-KW"/>
</dbReference>
<dbReference type="GO" id="GO:0019062">
    <property type="term" value="P:virion attachment to host cell"/>
    <property type="evidence" value="ECO:0007669"/>
    <property type="project" value="UniProtKB-KW"/>
</dbReference>
<dbReference type="Gene3D" id="6.10.140.1630">
    <property type="match status" value="1"/>
</dbReference>
<dbReference type="InterPro" id="IPR022741">
    <property type="entry name" value="Phage_B103_Gp8"/>
</dbReference>
<dbReference type="Pfam" id="PF11133">
    <property type="entry name" value="Phage_head_fibr"/>
    <property type="match status" value="1"/>
</dbReference>
<keyword id="KW-0945">Host-virus interaction</keyword>
<keyword id="KW-1161">Viral attachment to host cell</keyword>
<keyword id="KW-0946">Virion</keyword>
<keyword id="KW-1160">Virus entry into host cell</keyword>
<sequence length="257" mass="27639">MYSFTAYANSDIVAFHLLKFLSSENNIEISYADEDTIPEYVSIRDLKAGDKTTIDLYPLVAWKVIAQEDITTGDRVSVGKNGQVKKTTDLRTAFGYAVSLAKAGQLVTVAISTVFDTIITPDDLGNVDDDVKAFLKSNATDANKAKLRDLLVSNLDVKAFLNGSTSEDNKINLRNLLVSNPAILAFLNANPDTDTQTTLRTMIGAGTPYTLPAATTTTLGGVKRIPAFGNSTATDVATLVKDFNNLLAAMRTAGYIL</sequence>
<gene>
    <name type="primary">8.5</name>
</gene>
<organismHost>
    <name type="scientific">Bacillus subtilis</name>
    <dbReference type="NCBI Taxonomy" id="1423"/>
</organismHost>